<name>NODC_RHIS3</name>
<organism>
    <name type="scientific">Rhizobium sp. (strain N33)</name>
    <dbReference type="NCBI Taxonomy" id="103798"/>
    <lineage>
        <taxon>Bacteria</taxon>
        <taxon>Pseudomonadati</taxon>
        <taxon>Pseudomonadota</taxon>
        <taxon>Alphaproteobacteria</taxon>
        <taxon>Hyphomicrobiales</taxon>
        <taxon>Rhizobiaceae</taxon>
        <taxon>Rhizobium/Agrobacterium group</taxon>
        <taxon>Rhizobium</taxon>
    </lineage>
</organism>
<gene>
    <name type="primary">nodC</name>
</gene>
<proteinExistence type="inferred from homology"/>
<protein>
    <recommendedName>
        <fullName>N-acetylglucosaminyltransferase</fullName>
        <ecNumber>2.4.1.-</ecNumber>
    </recommendedName>
    <alternativeName>
        <fullName>Nodulation protein C</fullName>
    </alternativeName>
</protein>
<keyword id="KW-1003">Cell membrane</keyword>
<keyword id="KW-0328">Glycosyltransferase</keyword>
<keyword id="KW-0472">Membrane</keyword>
<keyword id="KW-0536">Nodulation</keyword>
<keyword id="KW-0808">Transferase</keyword>
<evidence type="ECO:0000305" key="1"/>
<reference key="1">
    <citation type="journal article" date="1996" name="Mol. Plant Microbe Interact.">
        <title>Sequence and mutational analysis of the common nodBCIJ region of Rhizobium sp. (Oxytropis arctobia) strain N33, a nitrogen-fixing microsymbiont of both arctic and temperate legumes.</title>
        <authorList>
            <person name="Cloutier J."/>
            <person name="Laberge S."/>
            <person name="Prevost D."/>
            <person name="Antoun H."/>
        </authorList>
    </citation>
    <scope>NUCLEOTIDE SEQUENCE [GENOMIC DNA]</scope>
</reference>
<accession>P72334</accession>
<feature type="chain" id="PRO_0000197193" description="N-acetylglucosaminyltransferase">
    <location>
        <begin position="1"/>
        <end position="450"/>
    </location>
</feature>
<sequence length="450" mass="49063">MDLLTTTSTVAVACYALLSTVYKGMQAVYSLPPTVAPASEDLVGSDLWPSVDVIIPCYNEGPLTLSACLDSIANQEYAGKLRVYVVDDGSGNRDAVIPIHDNYAGDPRFDFILLPENVGKRKAQIAAIRRSSGDLVLNVDSDTTLASDVIRKLARKMQDPAIGAAMGQLTASNRSDTWLTRLIDMEYWLACNEERAAQARFGAVMCCCGPCAMYRRSSLLSLLDQYETQMFRGKPSDFGEDRHLTILMLEAGFRTEYVPDAIAVTVVPDRLGPYLRQQLRWARSTFRDTLLALRLLPGLDRYLTLDVVGQNLGPLLLALSVIAGIAQFALTATLPWPTILVIAAMTIIRCTVTACRARQARFIGFSLHTFINIFLLLPLKAYALCTLSNSDWLSRKTATLPNADKKQIIVANPIAGVGTGSSGSAEAIRRTDLPRDSSKLVNADSVCSAE</sequence>
<dbReference type="EC" id="2.4.1.-"/>
<dbReference type="EMBL" id="U53327">
    <property type="protein sequence ID" value="AAB16897.1"/>
    <property type="molecule type" value="Genomic_DNA"/>
</dbReference>
<dbReference type="SMR" id="P72334"/>
<dbReference type="CAZy" id="GT2">
    <property type="family name" value="Glycosyltransferase Family 2"/>
</dbReference>
<dbReference type="GO" id="GO:0005886">
    <property type="term" value="C:plasma membrane"/>
    <property type="evidence" value="ECO:0007669"/>
    <property type="project" value="UniProtKB-SubCell"/>
</dbReference>
<dbReference type="GO" id="GO:0050501">
    <property type="term" value="F:hyaluronan synthase activity"/>
    <property type="evidence" value="ECO:0007669"/>
    <property type="project" value="TreeGrafter"/>
</dbReference>
<dbReference type="GO" id="GO:0085029">
    <property type="term" value="P:extracellular matrix assembly"/>
    <property type="evidence" value="ECO:0007669"/>
    <property type="project" value="TreeGrafter"/>
</dbReference>
<dbReference type="GO" id="GO:0030213">
    <property type="term" value="P:hyaluronan biosynthetic process"/>
    <property type="evidence" value="ECO:0007669"/>
    <property type="project" value="TreeGrafter"/>
</dbReference>
<dbReference type="CDD" id="cd06423">
    <property type="entry name" value="CESA_like"/>
    <property type="match status" value="1"/>
</dbReference>
<dbReference type="Gene3D" id="3.90.550.10">
    <property type="entry name" value="Spore Coat Polysaccharide Biosynthesis Protein SpsA, Chain A"/>
    <property type="match status" value="1"/>
</dbReference>
<dbReference type="InterPro" id="IPR026463">
    <property type="entry name" value="Chitooligosach_Synthase_NodC"/>
</dbReference>
<dbReference type="InterPro" id="IPR001173">
    <property type="entry name" value="Glyco_trans_2-like"/>
</dbReference>
<dbReference type="InterPro" id="IPR029044">
    <property type="entry name" value="Nucleotide-diphossugar_trans"/>
</dbReference>
<dbReference type="NCBIfam" id="TIGR04242">
    <property type="entry name" value="nodulat_NodC"/>
    <property type="match status" value="1"/>
</dbReference>
<dbReference type="PANTHER" id="PTHR22913">
    <property type="entry name" value="HYALURONAN SYNTHASE"/>
    <property type="match status" value="1"/>
</dbReference>
<dbReference type="PANTHER" id="PTHR22913:SF12">
    <property type="entry name" value="MANNURONAN SYNTHASE"/>
    <property type="match status" value="1"/>
</dbReference>
<dbReference type="Pfam" id="PF00535">
    <property type="entry name" value="Glycos_transf_2"/>
    <property type="match status" value="1"/>
</dbReference>
<dbReference type="SUPFAM" id="SSF53448">
    <property type="entry name" value="Nucleotide-diphospho-sugar transferases"/>
    <property type="match status" value="1"/>
</dbReference>
<comment type="function">
    <text>Involved in the synthesis of Nod factor, a sulfated N-acyl-beta-1,4-tetrasaccharide of N-acetylglucosamine which initiates a series of events in the host plant species leading eventually to nodulation.</text>
</comment>
<comment type="subcellular location">
    <subcellularLocation>
        <location evidence="1">Cell membrane</location>
        <topology evidence="1">Peripheral membrane protein</topology>
    </subcellularLocation>
</comment>
<comment type="similarity">
    <text evidence="1">Belongs to the NodC/HAS family.</text>
</comment>